<dbReference type="EMBL" id="CP001233">
    <property type="protein sequence ID" value="ACP06828.1"/>
    <property type="molecule type" value="Genomic_DNA"/>
</dbReference>
<dbReference type="RefSeq" id="WP_000586562.1">
    <property type="nucleotide sequence ID" value="NC_012578.1"/>
</dbReference>
<dbReference type="SMR" id="C3LRS3"/>
<dbReference type="KEGG" id="vcm:VCM66_2532"/>
<dbReference type="HOGENOM" id="CLU_186759_1_0_6"/>
<dbReference type="Proteomes" id="UP000001217">
    <property type="component" value="Chromosome I"/>
</dbReference>
<dbReference type="Gene3D" id="1.10.10.610">
    <property type="entry name" value="YehU-like"/>
    <property type="match status" value="1"/>
</dbReference>
<dbReference type="HAMAP" id="MF_00690">
    <property type="entry name" value="UPF0270"/>
    <property type="match status" value="1"/>
</dbReference>
<dbReference type="InterPro" id="IPR010648">
    <property type="entry name" value="UPF0270"/>
</dbReference>
<dbReference type="InterPro" id="IPR036685">
    <property type="entry name" value="YehU-like_sf"/>
</dbReference>
<dbReference type="NCBIfam" id="NF003438">
    <property type="entry name" value="PRK04966.1"/>
    <property type="match status" value="1"/>
</dbReference>
<dbReference type="Pfam" id="PF06794">
    <property type="entry name" value="UPF0270"/>
    <property type="match status" value="1"/>
</dbReference>
<dbReference type="PIRSF" id="PIRSF006169">
    <property type="entry name" value="UCP006169"/>
    <property type="match status" value="1"/>
</dbReference>
<dbReference type="SUPFAM" id="SSF118001">
    <property type="entry name" value="YehU-like"/>
    <property type="match status" value="1"/>
</dbReference>
<name>Y2532_VIBCM</name>
<sequence length="69" mass="7942">MIIPWQEIAPETLDNLIREFVLREGTDYGDIEVSLDEKIAQVRTQLQSGQAVIVYSELHETVDIKCHPF</sequence>
<proteinExistence type="inferred from homology"/>
<protein>
    <recommendedName>
        <fullName evidence="1">UPF0270 protein VCM66_2532</fullName>
    </recommendedName>
</protein>
<gene>
    <name type="ordered locus">VCM66_2532</name>
</gene>
<evidence type="ECO:0000255" key="1">
    <source>
        <dbReference type="HAMAP-Rule" id="MF_00690"/>
    </source>
</evidence>
<reference key="1">
    <citation type="journal article" date="2008" name="PLoS ONE">
        <title>A recalibrated molecular clock and independent origins for the cholera pandemic clones.</title>
        <authorList>
            <person name="Feng L."/>
            <person name="Reeves P.R."/>
            <person name="Lan R."/>
            <person name="Ren Y."/>
            <person name="Gao C."/>
            <person name="Zhou Z."/>
            <person name="Ren Y."/>
            <person name="Cheng J."/>
            <person name="Wang W."/>
            <person name="Wang J."/>
            <person name="Qian W."/>
            <person name="Li D."/>
            <person name="Wang L."/>
        </authorList>
    </citation>
    <scope>NUCLEOTIDE SEQUENCE [LARGE SCALE GENOMIC DNA]</scope>
    <source>
        <strain>M66-2</strain>
    </source>
</reference>
<accession>C3LRS3</accession>
<feature type="chain" id="PRO_1000198190" description="UPF0270 protein VCM66_2532">
    <location>
        <begin position="1"/>
        <end position="69"/>
    </location>
</feature>
<comment type="similarity">
    <text evidence="1">Belongs to the UPF0270 family.</text>
</comment>
<organism>
    <name type="scientific">Vibrio cholerae serotype O1 (strain M66-2)</name>
    <dbReference type="NCBI Taxonomy" id="579112"/>
    <lineage>
        <taxon>Bacteria</taxon>
        <taxon>Pseudomonadati</taxon>
        <taxon>Pseudomonadota</taxon>
        <taxon>Gammaproteobacteria</taxon>
        <taxon>Vibrionales</taxon>
        <taxon>Vibrionaceae</taxon>
        <taxon>Vibrio</taxon>
    </lineage>
</organism>